<accession>A1KUM5</accession>
<comment type="function">
    <text evidence="1">The RuvA-RuvB-RuvC complex processes Holliday junction (HJ) DNA during genetic recombination and DNA repair. Endonuclease that resolves HJ intermediates. Cleaves cruciform DNA by making single-stranded nicks across the HJ at symmetrical positions within the homologous arms, yielding a 5'-phosphate and a 3'-hydroxyl group; requires a central core of homology in the junction. The consensus cleavage sequence is 5'-(A/T)TT(C/G)-3'. Cleavage occurs on the 3'-side of the TT dinucleotide at the point of strand exchange. HJ branch migration catalyzed by RuvA-RuvB allows RuvC to scan DNA until it finds its consensus sequence, where it cleaves and resolves the cruciform DNA.</text>
</comment>
<comment type="catalytic activity">
    <reaction evidence="1">
        <text>Endonucleolytic cleavage at a junction such as a reciprocal single-stranded crossover between two homologous DNA duplexes (Holliday junction).</text>
        <dbReference type="EC" id="3.1.21.10"/>
    </reaction>
</comment>
<comment type="cofactor">
    <cofactor evidence="1">
        <name>Mg(2+)</name>
        <dbReference type="ChEBI" id="CHEBI:18420"/>
    </cofactor>
    <text evidence="1">Binds 2 Mg(2+) ion per subunit.</text>
</comment>
<comment type="subunit">
    <text evidence="1">Homodimer which binds Holliday junction (HJ) DNA. The HJ becomes 2-fold symmetrical on binding to RuvC with unstacked arms; it has a different conformation from HJ DNA in complex with RuvA. In the full resolvosome a probable DNA-RuvA(4)-RuvB(12)-RuvC(2) complex forms which resolves the HJ.</text>
</comment>
<comment type="subcellular location">
    <subcellularLocation>
        <location evidence="1">Cytoplasm</location>
    </subcellularLocation>
</comment>
<comment type="similarity">
    <text evidence="1">Belongs to the RuvC family.</text>
</comment>
<comment type="sequence caution" evidence="2">
    <conflict type="erroneous initiation">
        <sequence resource="EMBL-CDS" id="CAM10573"/>
    </conflict>
    <text>Extended N-terminus.</text>
</comment>
<protein>
    <recommendedName>
        <fullName evidence="1">Crossover junction endodeoxyribonuclease RuvC</fullName>
        <ecNumber evidence="1">3.1.21.10</ecNumber>
    </recommendedName>
    <alternativeName>
        <fullName evidence="1">Holliday junction nuclease RuvC</fullName>
    </alternativeName>
    <alternativeName>
        <fullName evidence="1">Holliday junction resolvase RuvC</fullName>
    </alternativeName>
</protein>
<proteinExistence type="inferred from homology"/>
<feature type="chain" id="PRO_0000332432" description="Crossover junction endodeoxyribonuclease RuvC">
    <location>
        <begin position="1"/>
        <end position="178"/>
    </location>
</feature>
<feature type="active site" evidence="1">
    <location>
        <position position="11"/>
    </location>
</feature>
<feature type="active site" evidence="1">
    <location>
        <position position="71"/>
    </location>
</feature>
<feature type="active site" evidence="1">
    <location>
        <position position="143"/>
    </location>
</feature>
<feature type="binding site" evidence="1">
    <location>
        <position position="11"/>
    </location>
    <ligand>
        <name>Mg(2+)</name>
        <dbReference type="ChEBI" id="CHEBI:18420"/>
        <label>1</label>
    </ligand>
</feature>
<feature type="binding site" evidence="1">
    <location>
        <position position="71"/>
    </location>
    <ligand>
        <name>Mg(2+)</name>
        <dbReference type="ChEBI" id="CHEBI:18420"/>
        <label>2</label>
    </ligand>
</feature>
<feature type="binding site" evidence="1">
    <location>
        <position position="143"/>
    </location>
    <ligand>
        <name>Mg(2+)</name>
        <dbReference type="ChEBI" id="CHEBI:18420"/>
        <label>1</label>
    </ligand>
</feature>
<sequence>MSATVRILGIDPGSRVTGFGIIDVRGRDHFYVASGCIKTPPDAPLADRIAVIVRHIGEVVAVYKPQQAAVEQVFVNVNPASTLMLGQARGAALAALVSHKLPVSEYTALQVKQAVVGKGKAAKEQVQHMVVQMLGLSGTPQADAADGLAVALTHALRNHGLAAKLNPSGMQVKRGRFQ</sequence>
<reference key="1">
    <citation type="journal article" date="2007" name="PLoS Genet.">
        <title>Meningococcal genetic variation mechanisms viewed through comparative analysis of serogroup C strain FAM18.</title>
        <authorList>
            <person name="Bentley S.D."/>
            <person name="Vernikos G.S."/>
            <person name="Snyder L.A.S."/>
            <person name="Churcher C."/>
            <person name="Arrowsmith C."/>
            <person name="Chillingworth T."/>
            <person name="Cronin A."/>
            <person name="Davis P.H."/>
            <person name="Holroyd N.E."/>
            <person name="Jagels K."/>
            <person name="Maddison M."/>
            <person name="Moule S."/>
            <person name="Rabbinowitsch E."/>
            <person name="Sharp S."/>
            <person name="Unwin L."/>
            <person name="Whitehead S."/>
            <person name="Quail M.A."/>
            <person name="Achtman M."/>
            <person name="Barrell B.G."/>
            <person name="Saunders N.J."/>
            <person name="Parkhill J."/>
        </authorList>
    </citation>
    <scope>NUCLEOTIDE SEQUENCE [LARGE SCALE GENOMIC DNA]</scope>
    <source>
        <strain>ATCC 700532 / DSM 15464 / FAM18</strain>
    </source>
</reference>
<name>RUVC_NEIMF</name>
<keyword id="KW-0963">Cytoplasm</keyword>
<keyword id="KW-0227">DNA damage</keyword>
<keyword id="KW-0233">DNA recombination</keyword>
<keyword id="KW-0234">DNA repair</keyword>
<keyword id="KW-0238">DNA-binding</keyword>
<keyword id="KW-0255">Endonuclease</keyword>
<keyword id="KW-0378">Hydrolase</keyword>
<keyword id="KW-0460">Magnesium</keyword>
<keyword id="KW-0479">Metal-binding</keyword>
<keyword id="KW-0540">Nuclease</keyword>
<dbReference type="EC" id="3.1.21.10" evidence="1"/>
<dbReference type="EMBL" id="AM421808">
    <property type="protein sequence ID" value="CAM10573.1"/>
    <property type="status" value="ALT_INIT"/>
    <property type="molecule type" value="Genomic_DNA"/>
</dbReference>
<dbReference type="RefSeq" id="WP_002220786.1">
    <property type="nucleotide sequence ID" value="NC_008767.1"/>
</dbReference>
<dbReference type="SMR" id="A1KUM5"/>
<dbReference type="KEGG" id="nmc:NMC1352"/>
<dbReference type="HOGENOM" id="CLU_091257_2_0_4"/>
<dbReference type="Proteomes" id="UP000002286">
    <property type="component" value="Chromosome"/>
</dbReference>
<dbReference type="GO" id="GO:0005737">
    <property type="term" value="C:cytoplasm"/>
    <property type="evidence" value="ECO:0007669"/>
    <property type="project" value="UniProtKB-SubCell"/>
</dbReference>
<dbReference type="GO" id="GO:0048476">
    <property type="term" value="C:Holliday junction resolvase complex"/>
    <property type="evidence" value="ECO:0007669"/>
    <property type="project" value="UniProtKB-UniRule"/>
</dbReference>
<dbReference type="GO" id="GO:0008821">
    <property type="term" value="F:crossover junction DNA endonuclease activity"/>
    <property type="evidence" value="ECO:0007669"/>
    <property type="project" value="UniProtKB-UniRule"/>
</dbReference>
<dbReference type="GO" id="GO:0003677">
    <property type="term" value="F:DNA binding"/>
    <property type="evidence" value="ECO:0007669"/>
    <property type="project" value="UniProtKB-KW"/>
</dbReference>
<dbReference type="GO" id="GO:0000287">
    <property type="term" value="F:magnesium ion binding"/>
    <property type="evidence" value="ECO:0007669"/>
    <property type="project" value="UniProtKB-UniRule"/>
</dbReference>
<dbReference type="GO" id="GO:0006310">
    <property type="term" value="P:DNA recombination"/>
    <property type="evidence" value="ECO:0007669"/>
    <property type="project" value="UniProtKB-UniRule"/>
</dbReference>
<dbReference type="GO" id="GO:0006281">
    <property type="term" value="P:DNA repair"/>
    <property type="evidence" value="ECO:0007669"/>
    <property type="project" value="UniProtKB-UniRule"/>
</dbReference>
<dbReference type="CDD" id="cd16962">
    <property type="entry name" value="RuvC"/>
    <property type="match status" value="1"/>
</dbReference>
<dbReference type="FunFam" id="3.30.420.10:FF:000002">
    <property type="entry name" value="Crossover junction endodeoxyribonuclease RuvC"/>
    <property type="match status" value="1"/>
</dbReference>
<dbReference type="Gene3D" id="3.30.420.10">
    <property type="entry name" value="Ribonuclease H-like superfamily/Ribonuclease H"/>
    <property type="match status" value="1"/>
</dbReference>
<dbReference type="HAMAP" id="MF_00034">
    <property type="entry name" value="RuvC"/>
    <property type="match status" value="1"/>
</dbReference>
<dbReference type="InterPro" id="IPR012337">
    <property type="entry name" value="RNaseH-like_sf"/>
</dbReference>
<dbReference type="InterPro" id="IPR036397">
    <property type="entry name" value="RNaseH_sf"/>
</dbReference>
<dbReference type="InterPro" id="IPR020563">
    <property type="entry name" value="X-over_junc_endoDNase_Mg_BS"/>
</dbReference>
<dbReference type="InterPro" id="IPR002176">
    <property type="entry name" value="X-over_junc_endoDNase_RuvC"/>
</dbReference>
<dbReference type="NCBIfam" id="TIGR00228">
    <property type="entry name" value="ruvC"/>
    <property type="match status" value="1"/>
</dbReference>
<dbReference type="PANTHER" id="PTHR30194">
    <property type="entry name" value="CROSSOVER JUNCTION ENDODEOXYRIBONUCLEASE RUVC"/>
    <property type="match status" value="1"/>
</dbReference>
<dbReference type="PANTHER" id="PTHR30194:SF3">
    <property type="entry name" value="CROSSOVER JUNCTION ENDODEOXYRIBONUCLEASE RUVC"/>
    <property type="match status" value="1"/>
</dbReference>
<dbReference type="Pfam" id="PF02075">
    <property type="entry name" value="RuvC"/>
    <property type="match status" value="1"/>
</dbReference>
<dbReference type="PRINTS" id="PR00696">
    <property type="entry name" value="RSOLVASERUVC"/>
</dbReference>
<dbReference type="SUPFAM" id="SSF53098">
    <property type="entry name" value="Ribonuclease H-like"/>
    <property type="match status" value="1"/>
</dbReference>
<dbReference type="PROSITE" id="PS01321">
    <property type="entry name" value="RUVC"/>
    <property type="match status" value="1"/>
</dbReference>
<evidence type="ECO:0000255" key="1">
    <source>
        <dbReference type="HAMAP-Rule" id="MF_00034"/>
    </source>
</evidence>
<evidence type="ECO:0000305" key="2"/>
<organism>
    <name type="scientific">Neisseria meningitidis serogroup C / serotype 2a (strain ATCC 700532 / DSM 15464 / FAM18)</name>
    <dbReference type="NCBI Taxonomy" id="272831"/>
    <lineage>
        <taxon>Bacteria</taxon>
        <taxon>Pseudomonadati</taxon>
        <taxon>Pseudomonadota</taxon>
        <taxon>Betaproteobacteria</taxon>
        <taxon>Neisseriales</taxon>
        <taxon>Neisseriaceae</taxon>
        <taxon>Neisseria</taxon>
    </lineage>
</organism>
<gene>
    <name evidence="1" type="primary">ruvC</name>
    <name type="ordered locus">NMC1352</name>
</gene>